<gene>
    <name type="primary">kanE</name>
    <name type="synonym">kanK</name>
</gene>
<protein>
    <recommendedName>
        <fullName>2-deoxy-scyllo-inosamine dehydrogenase</fullName>
        <shortName>DOIA dehydrogenase</shortName>
        <ecNumber>1.1.1.329</ecNumber>
    </recommendedName>
</protein>
<name>DOIAD_STRKN</name>
<evidence type="ECO:0000250" key="1"/>
<evidence type="ECO:0000305" key="2"/>
<organism>
    <name type="scientific">Streptomyces kanamyceticus</name>
    <dbReference type="NCBI Taxonomy" id="1967"/>
    <lineage>
        <taxon>Bacteria</taxon>
        <taxon>Bacillati</taxon>
        <taxon>Actinomycetota</taxon>
        <taxon>Actinomycetes</taxon>
        <taxon>Kitasatosporales</taxon>
        <taxon>Streptomycetaceae</taxon>
        <taxon>Streptomyces</taxon>
    </lineage>
</organism>
<comment type="function">
    <text evidence="1">Catalyzes the oxidation of 2-deoxy-scyllo-inosamine (DOIA) with NAD(+) or NADP(+), forming 3-amino-2,3-dideoxy-scyllo-inosose (amino-DOI).</text>
</comment>
<comment type="catalytic activity">
    <reaction>
        <text>2-deoxy-scyllo-inosamine + NADP(+) = 3-amino-2,3-dideoxy-scyllo-inosose + NADPH + H(+)</text>
        <dbReference type="Rhea" id="RHEA:33879"/>
        <dbReference type="ChEBI" id="CHEBI:15378"/>
        <dbReference type="ChEBI" id="CHEBI:57783"/>
        <dbReference type="ChEBI" id="CHEBI:58349"/>
        <dbReference type="ChEBI" id="CHEBI:65002"/>
        <dbReference type="ChEBI" id="CHEBI:65003"/>
        <dbReference type="EC" id="1.1.1.329"/>
    </reaction>
</comment>
<comment type="catalytic activity">
    <reaction>
        <text>2-deoxy-scyllo-inosamine + NAD(+) = 3-amino-2,3-dideoxy-scyllo-inosose + NADH + H(+)</text>
        <dbReference type="Rhea" id="RHEA:33883"/>
        <dbReference type="ChEBI" id="CHEBI:15378"/>
        <dbReference type="ChEBI" id="CHEBI:57540"/>
        <dbReference type="ChEBI" id="CHEBI:57945"/>
        <dbReference type="ChEBI" id="CHEBI:65002"/>
        <dbReference type="ChEBI" id="CHEBI:65003"/>
        <dbReference type="EC" id="1.1.1.329"/>
    </reaction>
</comment>
<comment type="cofactor">
    <cofactor evidence="1">
        <name>Zn(2+)</name>
        <dbReference type="ChEBI" id="CHEBI:29105"/>
    </cofactor>
    <text evidence="1">Binds 2 Zn(2+) ions per subunit.</text>
</comment>
<comment type="pathway">
    <text>Metabolic intermediate biosynthesis; 2-deoxystreptamine biosynthesis; 2-deoxystreptamine from D-glucose 6-phosphate: step 3/4.</text>
</comment>
<comment type="pathway">
    <text>Antibiotic biosynthesis; kanamycin biosynthesis.</text>
</comment>
<comment type="similarity">
    <text evidence="2">Belongs to the zinc-containing alcohol dehydrogenase family. DOIA dehydrogenase subfamily.</text>
</comment>
<dbReference type="EC" id="1.1.1.329"/>
<dbReference type="EMBL" id="AJ582817">
    <property type="protein sequence ID" value="CAF60530.1"/>
    <property type="molecule type" value="Genomic_DNA"/>
</dbReference>
<dbReference type="EMBL" id="AB164642">
    <property type="protein sequence ID" value="BAD20754.1"/>
    <property type="molecule type" value="Genomic_DNA"/>
</dbReference>
<dbReference type="EMBL" id="AJ628422">
    <property type="protein sequence ID" value="CAF31584.1"/>
    <property type="molecule type" value="Genomic_DNA"/>
</dbReference>
<dbReference type="RefSeq" id="WP_055545100.1">
    <property type="nucleotide sequence ID" value="NZ_CP023699.1"/>
</dbReference>
<dbReference type="SMR" id="Q6L743"/>
<dbReference type="KEGG" id="ag:CAF60530"/>
<dbReference type="BioCyc" id="MetaCyc:MONOMER-17186"/>
<dbReference type="BRENDA" id="1.1.1.329">
    <property type="organism ID" value="6046"/>
</dbReference>
<dbReference type="UniPathway" id="UPA00907">
    <property type="reaction ID" value="UER00923"/>
</dbReference>
<dbReference type="UniPathway" id="UPA00965"/>
<dbReference type="GO" id="GO:0046872">
    <property type="term" value="F:metal ion binding"/>
    <property type="evidence" value="ECO:0007669"/>
    <property type="project" value="UniProtKB-KW"/>
</dbReference>
<dbReference type="GO" id="GO:0016491">
    <property type="term" value="F:oxidoreductase activity"/>
    <property type="evidence" value="ECO:0007669"/>
    <property type="project" value="UniProtKB-KW"/>
</dbReference>
<dbReference type="GO" id="GO:0017000">
    <property type="term" value="P:antibiotic biosynthetic process"/>
    <property type="evidence" value="ECO:0007669"/>
    <property type="project" value="UniProtKB-KW"/>
</dbReference>
<dbReference type="Gene3D" id="3.90.180.10">
    <property type="entry name" value="Medium-chain alcohol dehydrogenases, catalytic domain"/>
    <property type="match status" value="1"/>
</dbReference>
<dbReference type="Gene3D" id="3.40.50.720">
    <property type="entry name" value="NAD(P)-binding Rossmann-like Domain"/>
    <property type="match status" value="1"/>
</dbReference>
<dbReference type="InterPro" id="IPR013149">
    <property type="entry name" value="ADH-like_C"/>
</dbReference>
<dbReference type="InterPro" id="IPR013154">
    <property type="entry name" value="ADH-like_N"/>
</dbReference>
<dbReference type="InterPro" id="IPR011032">
    <property type="entry name" value="GroES-like_sf"/>
</dbReference>
<dbReference type="InterPro" id="IPR036291">
    <property type="entry name" value="NAD(P)-bd_dom_sf"/>
</dbReference>
<dbReference type="InterPro" id="IPR020843">
    <property type="entry name" value="PKS_ER"/>
</dbReference>
<dbReference type="InterPro" id="IPR050129">
    <property type="entry name" value="Zn_alcohol_dh"/>
</dbReference>
<dbReference type="PANTHER" id="PTHR43401">
    <property type="entry name" value="L-THREONINE 3-DEHYDROGENASE"/>
    <property type="match status" value="1"/>
</dbReference>
<dbReference type="PANTHER" id="PTHR43401:SF2">
    <property type="entry name" value="L-THREONINE 3-DEHYDROGENASE"/>
    <property type="match status" value="1"/>
</dbReference>
<dbReference type="Pfam" id="PF08240">
    <property type="entry name" value="ADH_N"/>
    <property type="match status" value="1"/>
</dbReference>
<dbReference type="Pfam" id="PF00107">
    <property type="entry name" value="ADH_zinc_N"/>
    <property type="match status" value="1"/>
</dbReference>
<dbReference type="SMART" id="SM00829">
    <property type="entry name" value="PKS_ER"/>
    <property type="match status" value="1"/>
</dbReference>
<dbReference type="SUPFAM" id="SSF50129">
    <property type="entry name" value="GroES-like"/>
    <property type="match status" value="1"/>
</dbReference>
<dbReference type="SUPFAM" id="SSF51735">
    <property type="entry name" value="NAD(P)-binding Rossmann-fold domains"/>
    <property type="match status" value="1"/>
</dbReference>
<reference key="1">
    <citation type="journal article" date="2004" name="Arch. Biochem. Biophys.">
        <title>A gene cluster for biosynthesis of kanamycin from Streptomyces kanamyceticus: comparison with gentamicin biosynthetic gene cluster.</title>
        <authorList>
            <person name="Kharel M.K."/>
            <person name="Subba B."/>
            <person name="Basnet D.B."/>
            <person name="Woo J.S."/>
            <person name="Lee H.C."/>
            <person name="Liou K."/>
            <person name="Sohng J.K."/>
        </authorList>
    </citation>
    <scope>NUCLEOTIDE SEQUENCE [GENOMIC DNA]</scope>
    <source>
        <strain>ATCC 12853 / DSM 40500 / NBRC 13414 / NCIMB 9343 / NRRL B-2535 / VKM Ac-837</strain>
    </source>
</reference>
<reference key="2">
    <citation type="journal article" date="2004" name="J. Antibiot.">
        <title>The kanamycin biosynthetic gene cluster from Streptomyces kanamyceticus.</title>
        <authorList>
            <person name="Yanai K."/>
            <person name="Murakami T."/>
        </authorList>
    </citation>
    <scope>NUCLEOTIDE SEQUENCE [GENOMIC DNA]</scope>
    <source>
        <strain>21-18</strain>
    </source>
</reference>
<reference key="3">
    <citation type="submission" date="2004-02" db="EMBL/GenBank/DDBJ databases">
        <title>Cloning and sequencing of the kanamycin biosynthetic gene cluster from Streptomyces kanamyceticus DSM 40500.</title>
        <authorList>
            <person name="Aboshanab K.M.A."/>
            <person name="Schmidt-Beissner H."/>
            <person name="Wehmeier U.F."/>
            <person name="Welzel K."/>
            <person name="Vente A."/>
            <person name="Piepersberg W."/>
        </authorList>
    </citation>
    <scope>NUCLEOTIDE SEQUENCE [GENOMIC DNA]</scope>
    <source>
        <strain>ATCC 12853 / DSM 40500 / NBRC 13414 / NCIMB 9343 / NRRL B-2535 / VKM Ac-837</strain>
    </source>
</reference>
<sequence length="343" mass="35936">MKALVFHSPEKATFEQRDVPTPRPGEALVHIAYNSICGSDLSLYRGVWHGFGYPVVPGHEWSGTVVEINGANGHDQSLVGKNVVGDLTCACGNCAACGRGTPVLCENLQELGFTKDGACAEYMTIPVDNLRPLPDALSLRSACQVEPLAVALNAVSIAGVAPGDRVAVMGAGGIGLMLMQVARHLGGEVTVVSEPVAERRAVAGQLGATELCSAEPGQLAELVARRPELTPDVVLEASGYPAALQEAIEVVRPGGRIGLIGYRVEETGPMSPQHIAVKALTLRGSLGPGGRFDDAVELLAKGDDIAVEPLLSHEFGLADYATALDLALSRTNGNVRSFFNLRD</sequence>
<proteinExistence type="inferred from homology"/>
<keyword id="KW-0045">Antibiotic biosynthesis</keyword>
<keyword id="KW-0479">Metal-binding</keyword>
<keyword id="KW-0520">NAD</keyword>
<keyword id="KW-0521">NADP</keyword>
<keyword id="KW-0560">Oxidoreductase</keyword>
<keyword id="KW-0862">Zinc</keyword>
<accession>Q6L743</accession>
<feature type="chain" id="PRO_0000234044" description="2-deoxy-scyllo-inosamine dehydrogenase">
    <location>
        <begin position="1"/>
        <end position="343"/>
    </location>
</feature>
<feature type="binding site" evidence="1">
    <location>
        <position position="37"/>
    </location>
    <ligand>
        <name>Zn(2+)</name>
        <dbReference type="ChEBI" id="CHEBI:29105"/>
        <label>1</label>
        <note>catalytic</note>
    </ligand>
</feature>
<feature type="binding site" evidence="1">
    <location>
        <position position="59"/>
    </location>
    <ligand>
        <name>Zn(2+)</name>
        <dbReference type="ChEBI" id="CHEBI:29105"/>
        <label>1</label>
        <note>catalytic</note>
    </ligand>
</feature>
<feature type="binding site" evidence="1">
    <location>
        <position position="91"/>
    </location>
    <ligand>
        <name>Zn(2+)</name>
        <dbReference type="ChEBI" id="CHEBI:29105"/>
        <label>2</label>
    </ligand>
</feature>
<feature type="binding site" evidence="1">
    <location>
        <position position="94"/>
    </location>
    <ligand>
        <name>Zn(2+)</name>
        <dbReference type="ChEBI" id="CHEBI:29105"/>
        <label>2</label>
    </ligand>
</feature>
<feature type="binding site" evidence="1">
    <location>
        <position position="97"/>
    </location>
    <ligand>
        <name>Zn(2+)</name>
        <dbReference type="ChEBI" id="CHEBI:29105"/>
        <label>2</label>
    </ligand>
</feature>
<feature type="binding site" evidence="1">
    <location>
        <position position="105"/>
    </location>
    <ligand>
        <name>Zn(2+)</name>
        <dbReference type="ChEBI" id="CHEBI:29105"/>
        <label>2</label>
    </ligand>
</feature>
<feature type="binding site" evidence="1">
    <location>
        <position position="146"/>
    </location>
    <ligand>
        <name>Zn(2+)</name>
        <dbReference type="ChEBI" id="CHEBI:29105"/>
        <label>1</label>
        <note>catalytic</note>
    </ligand>
</feature>